<name>PSBA_HETNI</name>
<feature type="chain" id="PRO_0000316496" description="Photosystem II protein D1" evidence="1">
    <location>
        <begin position="1"/>
        <end position="347"/>
    </location>
</feature>
<feature type="transmembrane region" description="Helical" evidence="1">
    <location>
        <begin position="32"/>
        <end position="49"/>
    </location>
</feature>
<feature type="transmembrane region" description="Helical" evidence="1">
    <location>
        <begin position="121"/>
        <end position="136"/>
    </location>
</feature>
<feature type="transmembrane region" description="Helical" evidence="1">
    <location>
        <begin position="145"/>
        <end position="159"/>
    </location>
</feature>
<feature type="transmembrane region" description="Helical" evidence="1">
    <location>
        <begin position="200"/>
        <end position="221"/>
    </location>
</feature>
<feature type="transmembrane region" description="Helical" evidence="1">
    <location>
        <begin position="277"/>
        <end position="291"/>
    </location>
</feature>
<feature type="binding site" description="axial binding residue" evidence="1">
    <location>
        <position position="121"/>
    </location>
    <ligand>
        <name>chlorophyll a</name>
        <dbReference type="ChEBI" id="CHEBI:58416"/>
        <label>ChlzD1</label>
    </ligand>
    <ligandPart>
        <name>Mg</name>
        <dbReference type="ChEBI" id="CHEBI:25107"/>
    </ligandPart>
</feature>
<feature type="binding site" evidence="1">
    <location>
        <position position="129"/>
    </location>
    <ligand>
        <name>pheophytin a</name>
        <dbReference type="ChEBI" id="CHEBI:136840"/>
        <label>D1</label>
    </ligand>
</feature>
<feature type="binding site" evidence="1">
    <location>
        <position position="173"/>
    </location>
    <ligand>
        <name>[CaMn4O5] cluster</name>
        <dbReference type="ChEBI" id="CHEBI:189552"/>
    </ligand>
</feature>
<feature type="binding site" evidence="1">
    <location>
        <position position="192"/>
    </location>
    <ligand>
        <name>[CaMn4O5] cluster</name>
        <dbReference type="ChEBI" id="CHEBI:189552"/>
    </ligand>
</feature>
<feature type="binding site" description="axial binding residue" evidence="1">
    <location>
        <position position="201"/>
    </location>
    <ligand>
        <name>chlorophyll a</name>
        <dbReference type="ChEBI" id="CHEBI:58416"/>
        <label>PD1</label>
    </ligand>
    <ligandPart>
        <name>Mg</name>
        <dbReference type="ChEBI" id="CHEBI:25107"/>
    </ligandPart>
</feature>
<feature type="binding site" evidence="1">
    <location>
        <position position="218"/>
    </location>
    <ligand>
        <name>a quinone</name>
        <dbReference type="ChEBI" id="CHEBI:132124"/>
        <label>B</label>
    </ligand>
</feature>
<feature type="binding site" evidence="1">
    <location>
        <position position="218"/>
    </location>
    <ligand>
        <name>Fe cation</name>
        <dbReference type="ChEBI" id="CHEBI:24875"/>
        <note>ligand shared with heterodimeric partner</note>
    </ligand>
</feature>
<feature type="binding site" evidence="1">
    <location>
        <begin position="267"/>
        <end position="268"/>
    </location>
    <ligand>
        <name>a quinone</name>
        <dbReference type="ChEBI" id="CHEBI:132124"/>
        <label>B</label>
    </ligand>
</feature>
<feature type="binding site" evidence="1">
    <location>
        <position position="275"/>
    </location>
    <ligand>
        <name>Fe cation</name>
        <dbReference type="ChEBI" id="CHEBI:24875"/>
        <note>ligand shared with heterodimeric partner</note>
    </ligand>
</feature>
<feature type="binding site" evidence="1">
    <location>
        <position position="335"/>
    </location>
    <ligand>
        <name>[CaMn4O5] cluster</name>
        <dbReference type="ChEBI" id="CHEBI:189552"/>
    </ligand>
</feature>
<feature type="binding site" evidence="1">
    <location>
        <position position="336"/>
    </location>
    <ligand>
        <name>[CaMn4O5] cluster</name>
        <dbReference type="ChEBI" id="CHEBI:189552"/>
    </ligand>
</feature>
<feature type="binding site" evidence="1">
    <location>
        <position position="345"/>
    </location>
    <ligand>
        <name>[CaMn4O5] cluster</name>
        <dbReference type="ChEBI" id="CHEBI:189552"/>
    </ligand>
</feature>
<feature type="binding site" evidence="1">
    <location>
        <position position="347"/>
    </location>
    <ligand>
        <name>[CaMn4O5] cluster</name>
        <dbReference type="ChEBI" id="CHEBI:189552"/>
    </ligand>
</feature>
<feature type="site" description="Tyrosine radical intermediate" evidence="1">
    <location>
        <position position="164"/>
    </location>
</feature>
<feature type="site" description="Stabilizes free radical intermediate" evidence="1">
    <location>
        <position position="193"/>
    </location>
</feature>
<evidence type="ECO:0000255" key="1">
    <source>
        <dbReference type="HAMAP-Rule" id="MF_01379"/>
    </source>
</evidence>
<organism>
    <name type="scientific">Heterocapsa niei</name>
    <name type="common">Dinoflagellate</name>
    <name type="synonym">Cachonina niei</name>
    <dbReference type="NCBI Taxonomy" id="2920"/>
    <lineage>
        <taxon>Eukaryota</taxon>
        <taxon>Sar</taxon>
        <taxon>Alveolata</taxon>
        <taxon>Dinophyceae</taxon>
        <taxon>Peridiniales</taxon>
        <taxon>Heterocapsaceae</taxon>
        <taxon>Heterocapsa</taxon>
    </lineage>
</organism>
<proteinExistence type="inferred from homology"/>
<protein>
    <recommendedName>
        <fullName evidence="1">Photosystem II protein D1</fullName>
        <shortName evidence="1">PSII D1 protein</shortName>
        <ecNumber evidence="1">1.10.3.9</ecNumber>
    </recommendedName>
    <alternativeName>
        <fullName evidence="1">Photosystem II Q(B) protein</fullName>
    </alternativeName>
</protein>
<comment type="function">
    <text evidence="1">Photosystem II (PSII) is a light-driven water:plastoquinone oxidoreductase that uses light energy to abstract electrons from H(2)O, generating O(2) and a proton gradient subsequently used for ATP formation. It consists of a core antenna complex that captures photons, and an electron transfer chain that converts photonic excitation into a charge separation. The D1/D2 (PsbA/PsbD) reaction center heterodimer binds P680, the primary electron donor of PSII as well as several subsequent electron acceptors.</text>
</comment>
<comment type="catalytic activity">
    <reaction evidence="1">
        <text>2 a plastoquinone + 4 hnu + 2 H2O = 2 a plastoquinol + O2</text>
        <dbReference type="Rhea" id="RHEA:36359"/>
        <dbReference type="Rhea" id="RHEA-COMP:9561"/>
        <dbReference type="Rhea" id="RHEA-COMP:9562"/>
        <dbReference type="ChEBI" id="CHEBI:15377"/>
        <dbReference type="ChEBI" id="CHEBI:15379"/>
        <dbReference type="ChEBI" id="CHEBI:17757"/>
        <dbReference type="ChEBI" id="CHEBI:30212"/>
        <dbReference type="ChEBI" id="CHEBI:62192"/>
        <dbReference type="EC" id="1.10.3.9"/>
    </reaction>
</comment>
<comment type="cofactor">
    <text evidence="1">The D1/D2 heterodimer binds P680, chlorophylls that are the primary electron donor of PSII, and subsequent electron acceptors. It shares a non-heme iron and each subunit binds pheophytin, quinone, additional chlorophylls, carotenoids and lipids. D1 provides most of the ligands for the Mn4-Ca-O5 cluster of the oxygen-evolving complex (OEC). There is also a Cl(-1) ion associated with D1 and D2, which is required for oxygen evolution. The PSII complex binds additional chlorophylls, carotenoids and specific lipids.</text>
</comment>
<comment type="subunit">
    <text evidence="1">PSII is composed of 1 copy each of membrane proteins PsbA, PsbB, PsbC, PsbD, PsbE, PsbF, PsbH, PsbI, PsbJ, PsbK, PsbL, PsbM, PsbT, PsbX, PsbY, PsbZ, Psb30/Ycf12, at least 3 peripheral proteins of the oxygen-evolving complex and a large number of cofactors. It forms dimeric complexes.</text>
</comment>
<comment type="subcellular location">
    <subcellularLocation>
        <location evidence="1">Plastid</location>
        <location evidence="1">Chloroplast thylakoid membrane</location>
        <topology evidence="1">Multi-pass membrane protein</topology>
    </subcellularLocation>
</comment>
<comment type="PTM">
    <text evidence="1">Tyr-164 forms a radical intermediate that is referred to as redox-active TyrZ, YZ or Y-Z.</text>
</comment>
<comment type="miscellaneous">
    <text evidence="1">2 of the reaction center chlorophylls (ChlD1 and ChlD2) are entirely coordinated by water.</text>
</comment>
<comment type="miscellaneous">
    <text evidence="1">Herbicides such as atrazine, BNT, diuron or ioxynil bind in the Q(B) binding site and block subsequent electron transfer.</text>
</comment>
<comment type="similarity">
    <text evidence="1">Belongs to the reaction center PufL/M/PsbA/D family.</text>
</comment>
<keyword id="KW-0106">Calcium</keyword>
<keyword id="KW-0148">Chlorophyll</keyword>
<keyword id="KW-0150">Chloroplast</keyword>
<keyword id="KW-0157">Chromophore</keyword>
<keyword id="KW-0249">Electron transport</keyword>
<keyword id="KW-0359">Herbicide resistance</keyword>
<keyword id="KW-0408">Iron</keyword>
<keyword id="KW-0460">Magnesium</keyword>
<keyword id="KW-0464">Manganese</keyword>
<keyword id="KW-0472">Membrane</keyword>
<keyword id="KW-0479">Metal-binding</keyword>
<keyword id="KW-0560">Oxidoreductase</keyword>
<keyword id="KW-0602">Photosynthesis</keyword>
<keyword id="KW-0604">Photosystem II</keyword>
<keyword id="KW-0934">Plastid</keyword>
<keyword id="KW-0793">Thylakoid</keyword>
<keyword id="KW-0812">Transmembrane</keyword>
<keyword id="KW-1133">Transmembrane helix</keyword>
<keyword id="KW-0813">Transport</keyword>
<reference key="1">
    <citation type="journal article" date="2000" name="J. Mol. Evol.">
        <title>Phylogeny of ultra-rapidly evolving dinoflagellate chloroplast genes: a possible common origin for sporozoan and dinoflagellate plastids.</title>
        <authorList>
            <person name="Zhang Z."/>
            <person name="Green B.R."/>
            <person name="Cavalier-Smith T."/>
        </authorList>
    </citation>
    <scope>NUCLEOTIDE SEQUENCE [GENOMIC DNA]</scope>
    <source>
        <strain>CCMP447</strain>
    </source>
</reference>
<reference key="2">
    <citation type="journal article" date="2002" name="Mol. Biol. Evol.">
        <title>Evolution of dinoflagellate unigenic minicircles and the partially concerted divergence of their putative replicon origins.</title>
        <authorList>
            <person name="Zhang Z."/>
            <person name="Cavalier-Smith T."/>
            <person name="Green B.R."/>
        </authorList>
    </citation>
    <scope>NUCLEOTIDE SEQUENCE [GENOMIC DNA]</scope>
    <source>
        <strain>CCMP447</strain>
    </source>
</reference>
<dbReference type="EC" id="1.10.3.9" evidence="1"/>
<dbReference type="EMBL" id="AF206709">
    <property type="protein sequence ID" value="AAF89983.1"/>
    <property type="molecule type" value="Genomic_DNA"/>
</dbReference>
<dbReference type="EMBL" id="AY004265">
    <property type="protein sequence ID" value="AAG25878.1"/>
    <property type="molecule type" value="Genomic_DNA"/>
</dbReference>
<dbReference type="SMR" id="Q9MSC0"/>
<dbReference type="GO" id="GO:0009535">
    <property type="term" value="C:chloroplast thylakoid membrane"/>
    <property type="evidence" value="ECO:0007669"/>
    <property type="project" value="UniProtKB-SubCell"/>
</dbReference>
<dbReference type="GO" id="GO:0009523">
    <property type="term" value="C:photosystem II"/>
    <property type="evidence" value="ECO:0007669"/>
    <property type="project" value="UniProtKB-KW"/>
</dbReference>
<dbReference type="GO" id="GO:0016168">
    <property type="term" value="F:chlorophyll binding"/>
    <property type="evidence" value="ECO:0007669"/>
    <property type="project" value="UniProtKB-UniRule"/>
</dbReference>
<dbReference type="GO" id="GO:0045156">
    <property type="term" value="F:electron transporter, transferring electrons within the cyclic electron transport pathway of photosynthesis activity"/>
    <property type="evidence" value="ECO:0007669"/>
    <property type="project" value="InterPro"/>
</dbReference>
<dbReference type="GO" id="GO:0005506">
    <property type="term" value="F:iron ion binding"/>
    <property type="evidence" value="ECO:0007669"/>
    <property type="project" value="UniProtKB-UniRule"/>
</dbReference>
<dbReference type="GO" id="GO:0016682">
    <property type="term" value="F:oxidoreductase activity, acting on diphenols and related substances as donors, oxygen as acceptor"/>
    <property type="evidence" value="ECO:0007669"/>
    <property type="project" value="UniProtKB-UniRule"/>
</dbReference>
<dbReference type="GO" id="GO:0009772">
    <property type="term" value="P:photosynthetic electron transport in photosystem II"/>
    <property type="evidence" value="ECO:0007669"/>
    <property type="project" value="InterPro"/>
</dbReference>
<dbReference type="GO" id="GO:0009635">
    <property type="term" value="P:response to herbicide"/>
    <property type="evidence" value="ECO:0007669"/>
    <property type="project" value="UniProtKB-KW"/>
</dbReference>
<dbReference type="Gene3D" id="1.20.85.10">
    <property type="entry name" value="Photosystem II protein D1-like"/>
    <property type="match status" value="1"/>
</dbReference>
<dbReference type="HAMAP" id="MF_01379">
    <property type="entry name" value="PSII_PsbA_D1"/>
    <property type="match status" value="1"/>
</dbReference>
<dbReference type="InterPro" id="IPR055266">
    <property type="entry name" value="D1/D2"/>
</dbReference>
<dbReference type="InterPro" id="IPR036854">
    <property type="entry name" value="Photo_II_D1/D2_sf"/>
</dbReference>
<dbReference type="InterPro" id="IPR000484">
    <property type="entry name" value="Photo_RC_L/M"/>
</dbReference>
<dbReference type="InterPro" id="IPR055265">
    <property type="entry name" value="Photo_RC_L/M_CS"/>
</dbReference>
<dbReference type="InterPro" id="IPR005867">
    <property type="entry name" value="PSII_D1"/>
</dbReference>
<dbReference type="NCBIfam" id="TIGR01151">
    <property type="entry name" value="psbA"/>
    <property type="match status" value="1"/>
</dbReference>
<dbReference type="PANTHER" id="PTHR33149:SF12">
    <property type="entry name" value="PHOTOSYSTEM II D2 PROTEIN"/>
    <property type="match status" value="1"/>
</dbReference>
<dbReference type="PANTHER" id="PTHR33149">
    <property type="entry name" value="PHOTOSYSTEM II PROTEIN D1"/>
    <property type="match status" value="1"/>
</dbReference>
<dbReference type="Pfam" id="PF00124">
    <property type="entry name" value="Photo_RC"/>
    <property type="match status" value="1"/>
</dbReference>
<dbReference type="SUPFAM" id="SSF81483">
    <property type="entry name" value="Bacterial photosystem II reaction centre, L and M subunits"/>
    <property type="match status" value="1"/>
</dbReference>
<dbReference type="PROSITE" id="PS00244">
    <property type="entry name" value="REACTION_CENTER"/>
    <property type="match status" value="1"/>
</dbReference>
<sequence length="347" mass="38026">MKNTFNTSVFANAYSFWGYVIGFILSTSNRLYIGWFGILMFPLLVLATVAFISAFIFAPPVDIDGIREPVAGALLYGNNIISGAVIPSSNAIGVHFYPVWEALGFDEWLYNGGTYQFVVLHFILGAGAYMGREWEFAFRLGMRPWIFVAFSAPLVAASAVFVVYPIGQGSFSDGMPLGISGTFNFMLVFQAEHNILMHPFHILGVAAVFGGSLFSAMHGSLVTSSLLAETAGDLSLNVGYNFGQEDETYSISAAHGYFGRLIFQYASFNNSRSLHFFLAAWPVIGIWFTALGVSTMAFNLNGLNFNQSIIDSSGHLINSWADIVNRADLGMEVMHERNAHNFPLDLA</sequence>
<gene>
    <name evidence="1" type="primary">psbA</name>
</gene>
<accession>Q9MSC0</accession>
<geneLocation type="chloroplast"/>